<reference key="1">
    <citation type="journal article" date="2009" name="PLoS Biol.">
        <title>Lineage-specific biology revealed by a finished genome assembly of the mouse.</title>
        <authorList>
            <person name="Church D.M."/>
            <person name="Goodstadt L."/>
            <person name="Hillier L.W."/>
            <person name="Zody M.C."/>
            <person name="Goldstein S."/>
            <person name="She X."/>
            <person name="Bult C.J."/>
            <person name="Agarwala R."/>
            <person name="Cherry J.L."/>
            <person name="DiCuccio M."/>
            <person name="Hlavina W."/>
            <person name="Kapustin Y."/>
            <person name="Meric P."/>
            <person name="Maglott D."/>
            <person name="Birtle Z."/>
            <person name="Marques A.C."/>
            <person name="Graves T."/>
            <person name="Zhou S."/>
            <person name="Teague B."/>
            <person name="Potamousis K."/>
            <person name="Churas C."/>
            <person name="Place M."/>
            <person name="Herschleb J."/>
            <person name="Runnheim R."/>
            <person name="Forrest D."/>
            <person name="Amos-Landgraf J."/>
            <person name="Schwartz D.C."/>
            <person name="Cheng Z."/>
            <person name="Lindblad-Toh K."/>
            <person name="Eichler E.E."/>
            <person name="Ponting C.P."/>
        </authorList>
    </citation>
    <scope>NUCLEOTIDE SEQUENCE [LARGE SCALE GENOMIC DNA]</scope>
    <source>
        <strain>C57BL/6J</strain>
    </source>
</reference>
<reference key="2">
    <citation type="journal article" date="2010" name="Cell">
        <title>A tissue-specific atlas of mouse protein phosphorylation and expression.</title>
        <authorList>
            <person name="Huttlin E.L."/>
            <person name="Jedrychowski M.P."/>
            <person name="Elias J.E."/>
            <person name="Goswami T."/>
            <person name="Rad R."/>
            <person name="Beausoleil S.A."/>
            <person name="Villen J."/>
            <person name="Haas W."/>
            <person name="Sowa M.E."/>
            <person name="Gygi S.P."/>
        </authorList>
    </citation>
    <scope>IDENTIFICATION BY MASS SPECTROMETRY [LARGE SCALE ANALYSIS]</scope>
    <source>
        <tissue>Brain</tissue>
        <tissue>Brown adipose tissue</tissue>
        <tissue>Kidney</tissue>
    </source>
</reference>
<reference key="3">
    <citation type="journal article" date="2013" name="Cell">
        <title>Roquin promotes constitutive mRNA decay via a conserved class of stem-loop recognition motifs.</title>
        <authorList>
            <person name="Leppek K."/>
            <person name="Schott J."/>
            <person name="Reitter S."/>
            <person name="Poetz F."/>
            <person name="Hammond M.C."/>
            <person name="Stoecklin G."/>
        </authorList>
    </citation>
    <scope>FUNCTION</scope>
    <scope>INTERACTION WITH CCR4-NOT COMPLEX</scope>
</reference>
<reference key="4">
    <citation type="journal article" date="2013" name="Immunity">
        <title>Roquin paralogs 1 and 2 redundantly repress the Icos and Ox40 costimulator mRNAs and control follicular helper T cell differentiation.</title>
        <authorList>
            <person name="Vogel K.U."/>
            <person name="Edelmann S.L."/>
            <person name="Jeltsch K.M."/>
            <person name="Bertossi A."/>
            <person name="Heger K."/>
            <person name="Heinz G.A."/>
            <person name="Zoller J."/>
            <person name="Warth S.C."/>
            <person name="Hoefig K.P."/>
            <person name="Lohs C."/>
            <person name="Neff F."/>
            <person name="Kremmer E."/>
            <person name="Schick J."/>
            <person name="Repsilber D."/>
            <person name="Geerlof A."/>
            <person name="Blum H."/>
            <person name="Wurst W."/>
            <person name="Heikenwalder M."/>
            <person name="Schmidt-Supprian M."/>
            <person name="Heissmeyer V."/>
        </authorList>
    </citation>
    <scope>FUNCTION</scope>
    <scope>INTERACTION WITH EDC4</scope>
    <scope>DISRUPTION PHENOTYPE</scope>
    <scope>TISSUE SPECIFICITY</scope>
</reference>
<reference key="5">
    <citation type="journal article" date="2013" name="Immunity">
        <title>Roquin-2 shares functions with its paralog Roquin-1 in the repression of mRNAs controlling T follicular helper cells and systemic inflammation.</title>
        <authorList>
            <person name="Pratama A."/>
            <person name="Ramiscal R.R."/>
            <person name="Silva D.G."/>
            <person name="Das S.K."/>
            <person name="Athanasopoulos V."/>
            <person name="Fitch J."/>
            <person name="Botelho N.K."/>
            <person name="Chang P.P."/>
            <person name="Hu X."/>
            <person name="Hogan J.J."/>
            <person name="Mana P."/>
            <person name="Bernal D."/>
            <person name="Korner H."/>
            <person name="Yu D."/>
            <person name="Goodnow C.C."/>
            <person name="Cook M.C."/>
            <person name="Vinuesa C.G."/>
        </authorList>
    </citation>
    <scope>FUNCTION</scope>
    <scope>SUBCELLULAR LOCATION</scope>
    <scope>DOMAIN</scope>
</reference>
<reference key="6">
    <citation type="journal article" date="2013" name="Immunol. Rev.">
        <title>Molecular control of Tfh-cell differentiation by Roquin family proteins.</title>
        <authorList>
            <person name="Heissmeyer V."/>
            <person name="Vogel K.U."/>
        </authorList>
    </citation>
    <scope>REVIEW</scope>
</reference>
<reference key="7">
    <citation type="journal article" date="2014" name="Nat. Immunol.">
        <title>Cleavage of roquin and regnase-1 by the paracaspase MALT1 releases their cooperatively repressed targets to promote T(H)17 differentiation.</title>
        <authorList>
            <person name="Jeltsch K.M."/>
            <person name="Hu D."/>
            <person name="Brenner S."/>
            <person name="Zoeller J."/>
            <person name="Heinz G.A."/>
            <person name="Nagel D."/>
            <person name="Vogel K.U."/>
            <person name="Rehage N."/>
            <person name="Warth S.C."/>
            <person name="Edelmann S.L."/>
            <person name="Gloury R."/>
            <person name="Martin N."/>
            <person name="Lohs C."/>
            <person name="Lech M."/>
            <person name="Stehklein J.E."/>
            <person name="Geerlof A."/>
            <person name="Kremmer E."/>
            <person name="Weber A."/>
            <person name="Anders H.J."/>
            <person name="Schmitz I."/>
            <person name="Schmidt-Supprian M."/>
            <person name="Fu M."/>
            <person name="Holtmann H."/>
            <person name="Krappmann D."/>
            <person name="Ruland J."/>
            <person name="Kallies A."/>
            <person name="Heikenwalder M."/>
            <person name="Heissmeyer V."/>
        </authorList>
    </citation>
    <scope>DISRUPTION PHENOTYPE</scope>
    <scope>FUNCTION</scope>
    <scope>PROTEOLYTIC CLEAVAGE</scope>
</reference>
<reference key="8">
    <citation type="journal article" date="2015" name="Nat. Commun.">
        <title>Roquin binds microRNA-146a and Argonaute2 to regulate microRNA homeostasis.</title>
        <authorList>
            <person name="Srivastava M."/>
            <person name="Duan G."/>
            <person name="Kershaw N.J."/>
            <person name="Athanasopoulos V."/>
            <person name="Yeo J.H."/>
            <person name="Ose T."/>
            <person name="Hu D."/>
            <person name="Brown S.H."/>
            <person name="Jergic S."/>
            <person name="Patel H.R."/>
            <person name="Pratama A."/>
            <person name="Richards S."/>
            <person name="Verma A."/>
            <person name="Jones E.Y."/>
            <person name="Heissmeyer V."/>
            <person name="Preiss T."/>
            <person name="Dixon N.E."/>
            <person name="Chong M.M."/>
            <person name="Babon J.J."/>
            <person name="Vinuesa C.G."/>
        </authorList>
    </citation>
    <scope>FUNCTION</scope>
</reference>
<comment type="function">
    <text evidence="2 6 7 8 9 10">Post-transcriptional repressor of mRNAs containing a conserved stem loop motif, called constitutive decay element (CDE), which is often located in the 3'-UTR, as in HMGXB3, ICOS, IER3, NFKBID, NFKBIZ, PPP1R10, TNF and in many more mRNAs. Binds to CDE and promotes mRNA deadenylation and degradation. This process does not involve miRNAs (PubMed:23663784). In follicular helper T (Tfh) cells, represses of ICOS and TNFRSF4 expression, thus preventing spontaneous Tfh cell differentiation, germinal center B-cell differentiation in the absence of immunization and autoimmunity. In resting or LPS-stimulated macrophages, controls inflammation by suppressing TNF expression. Also recognizes CDE in its own mRNA and in that of paralogous RC3H1, possibly leading to feedback loop regulation (PubMed:23583642, PubMed:23583643). Inhibits cooperatively with ZC3H12A the differentiation of helper T cells Th17 in lungs. They repress target mRNA encoding the Th17 cell-promoting factors IL6, ICOS, REL, IRF4, NFKBID and NFKBIZ. The cooperation requires RNA-binding by RC3H1 and the nuclease activity of ZC3H12A (PubMed:25282160). miRNA-binding protein that regulates microRNA homeostasis. Enhances DICER-mediated processing of pre-MIR146a but reduces mature MIR146a levels through an increase of 3' end uridylation. Both inhibits ICOS mRNA expression and they may act together to exert the suppression (PubMed:25697406). Acts as a ubiquitin E3 ligase. Pairs with E2 enzymes UBE2B, UBE2D2, UBE2E2, UBE2E3, UBE2G2, UBE2K and UBE2Q2 and produces polyubiquitin chains. Shows the strongest activity when paired with UBE2N:UBE2V1 or UBE2N:UBE2V2 E2 complexes and generate both short and long polyubiquitin chains. Involved in the ubiquitination of MAP3K5 (By similarity). Able to interact with double-stranded RNA (dsRNA).</text>
</comment>
<comment type="catalytic activity">
    <reaction evidence="2">
        <text>S-ubiquitinyl-[E2 ubiquitin-conjugating enzyme]-L-cysteine + [acceptor protein]-L-lysine = [E2 ubiquitin-conjugating enzyme]-L-cysteine + N(6)-ubiquitinyl-[acceptor protein]-L-lysine.</text>
        <dbReference type="EC" id="2.3.2.27"/>
    </reaction>
</comment>
<comment type="activity regulation">
    <text evidence="2">Binding to dsRNA, but not CDE RNA, crosstalks with the E3 ubiquitin ligase activity and may inhibit ubiquitination.</text>
</comment>
<comment type="pathway">
    <text evidence="2">Protein modification; protein ubiquitination.</text>
</comment>
<comment type="subunit">
    <text evidence="2 7 8">Interacts with EDC4 (PubMed:23583643). Interacts with CCR4-NOT deadenylase complex (PubMed:23663784). Interacts with MAP3K5; the interaction is probably stimulus-dependent (By similarity).</text>
</comment>
<comment type="subcellular location">
    <subcellularLocation>
        <location evidence="6">Cytoplasm</location>
        <location evidence="6">P-body</location>
    </subcellularLocation>
    <text>During stress, such as that induced by arsenite, localizes to cytosolic stress granules. Localization to stress granules, but not to P-bodies, depends upon the RING-type zinc finger.</text>
</comment>
<comment type="tissue specificity">
    <text evidence="7">Highest levels in lymph node and thymus and slightly lesser amounts in brain, lung, and spleen (at protein level). Very weak expression in heart, muscle, and kidney (at protein level). Expressed in CD4(+) helper T-cells (at protein level).</text>
</comment>
<comment type="domain">
    <text evidence="6">The RING-type zinc finger is required for proper localization to stress granules, but not to P-bodies.</text>
</comment>
<comment type="domain">
    <text evidence="1 8">The ROQ region is required for CDE RNA-binding. Has 2 separate RNA-binding sites, one for CDE RNA and the other for dsRNA (PubMed:23663784). It may also be involved in localization to stress granules (By similarity).</text>
</comment>
<comment type="domain">
    <text evidence="2">HEPN (higher eukaryotes and prokaryotes nucleotide-binding) are observed in both N- and C-terminal sides of ROQ domain with 3D structure even if they are poredcted on the basis of sequence.</text>
</comment>
<comment type="PTM">
    <text evidence="9">Proteolytically cleaved by MALT1 in activated CD4(+) T cells; cleavage at Arg-509 is critical for promoting RC3H1 degradation in response to T-cell receptor (TCR) stimulation, and hence is necessary for prolonging the stability of a set of mRNAs controlling Th17 cell differentiation.</text>
</comment>
<comment type="disruption phenotype">
    <text evidence="7 9">Mutant animals are born at Mendelian ratio, but very few reach adulthood, a large proportion die within the first days after birth. Lethality can be rescued by changing the genetic background from C57BL/6 to outbred NMRI, on which mutant animals appear healthy and fertile, although smaller. Immune cell homeostasis is normal (PubMed:23583643). However, Mice lacking both Rc3h1 and Rc3h2 genes in CD4(+) T-cells develop lymphadenopathy and splenomegaly with increased spleen weight and cellularity, already at young age. They show a prominent lung pathology with a progressive reduction in the alveolar space concomitant with inflammation. They show an average survival of 130 days. CD4(+) T-cells of these mutants show a pronounced bias toward Th17 differentiation (PubMed:23583643, PubMed:25282160).</text>
</comment>
<dbReference type="EC" id="2.3.2.27" evidence="2"/>
<dbReference type="EMBL" id="AL929572">
    <property type="status" value="NOT_ANNOTATED_CDS"/>
    <property type="molecule type" value="Genomic_DNA"/>
</dbReference>
<dbReference type="CCDS" id="CCDS38116.1"/>
<dbReference type="RefSeq" id="NP_001094061.1">
    <property type="nucleotide sequence ID" value="NM_001100591.1"/>
</dbReference>
<dbReference type="RefSeq" id="XP_006498187.1">
    <property type="nucleotide sequence ID" value="XM_006498124.5"/>
</dbReference>
<dbReference type="SMR" id="P0C090"/>
<dbReference type="BioGRID" id="235547">
    <property type="interactions" value="2"/>
</dbReference>
<dbReference type="FunCoup" id="P0C090">
    <property type="interactions" value="3861"/>
</dbReference>
<dbReference type="IntAct" id="P0C090">
    <property type="interactions" value="38"/>
</dbReference>
<dbReference type="STRING" id="10090.ENSMUSP00000097721"/>
<dbReference type="GlyGen" id="P0C090">
    <property type="glycosylation" value="14 sites, 1 O-linked glycan (12 sites)"/>
</dbReference>
<dbReference type="iPTMnet" id="P0C090"/>
<dbReference type="PhosphoSitePlus" id="P0C090"/>
<dbReference type="PaxDb" id="10090-ENSMUSP00000097721"/>
<dbReference type="ProteomicsDB" id="255165"/>
<dbReference type="Pumba" id="P0C090"/>
<dbReference type="Antibodypedia" id="30358">
    <property type="antibodies" value="59 antibodies from 14 providers"/>
</dbReference>
<dbReference type="Ensembl" id="ENSMUST00000100143.10">
    <property type="protein sequence ID" value="ENSMUSP00000097721.4"/>
    <property type="gene ID" value="ENSMUSG00000075376.11"/>
</dbReference>
<dbReference type="Ensembl" id="ENSMUST00000112936.4">
    <property type="protein sequence ID" value="ENSMUSP00000108558.2"/>
    <property type="gene ID" value="ENSMUSG00000075376.11"/>
</dbReference>
<dbReference type="GeneID" id="319817"/>
<dbReference type="KEGG" id="mmu:319817"/>
<dbReference type="UCSC" id="uc008jmq.1">
    <property type="organism name" value="mouse"/>
</dbReference>
<dbReference type="AGR" id="MGI:2442789"/>
<dbReference type="CTD" id="54542"/>
<dbReference type="MGI" id="MGI:2442789">
    <property type="gene designation" value="Rc3h2"/>
</dbReference>
<dbReference type="VEuPathDB" id="HostDB:ENSMUSG00000075376"/>
<dbReference type="eggNOG" id="KOG3161">
    <property type="taxonomic scope" value="Eukaryota"/>
</dbReference>
<dbReference type="GeneTree" id="ENSGT00940000157685"/>
<dbReference type="InParanoid" id="P0C090"/>
<dbReference type="OMA" id="GTEHVEN"/>
<dbReference type="OrthoDB" id="10067217at2759"/>
<dbReference type="PhylomeDB" id="P0C090"/>
<dbReference type="TreeFam" id="TF317698"/>
<dbReference type="UniPathway" id="UPA00143"/>
<dbReference type="BioGRID-ORCS" id="319817">
    <property type="hits" value="3 hits in 79 CRISPR screens"/>
</dbReference>
<dbReference type="ChiTaRS" id="Rc3h2">
    <property type="organism name" value="mouse"/>
</dbReference>
<dbReference type="PRO" id="PR:P0C090"/>
<dbReference type="Proteomes" id="UP000000589">
    <property type="component" value="Chromosome 2"/>
</dbReference>
<dbReference type="RNAct" id="P0C090">
    <property type="molecule type" value="protein"/>
</dbReference>
<dbReference type="Bgee" id="ENSMUSG00000075376">
    <property type="expression patterns" value="Expressed in rostral migratory stream and 245 other cell types or tissues"/>
</dbReference>
<dbReference type="ExpressionAtlas" id="P0C090">
    <property type="expression patterns" value="baseline and differential"/>
</dbReference>
<dbReference type="GO" id="GO:0009986">
    <property type="term" value="C:cell surface"/>
    <property type="evidence" value="ECO:0007669"/>
    <property type="project" value="Ensembl"/>
</dbReference>
<dbReference type="GO" id="GO:0043231">
    <property type="term" value="C:intracellular membrane-bounded organelle"/>
    <property type="evidence" value="ECO:0007669"/>
    <property type="project" value="Ensembl"/>
</dbReference>
<dbReference type="GO" id="GO:0016020">
    <property type="term" value="C:membrane"/>
    <property type="evidence" value="ECO:0007669"/>
    <property type="project" value="Ensembl"/>
</dbReference>
<dbReference type="GO" id="GO:0000932">
    <property type="term" value="C:P-body"/>
    <property type="evidence" value="ECO:0007669"/>
    <property type="project" value="UniProtKB-SubCell"/>
</dbReference>
<dbReference type="GO" id="GO:0003677">
    <property type="term" value="F:DNA binding"/>
    <property type="evidence" value="ECO:0007669"/>
    <property type="project" value="Ensembl"/>
</dbReference>
<dbReference type="GO" id="GO:0003725">
    <property type="term" value="F:double-stranded RNA binding"/>
    <property type="evidence" value="ECO:0000250"/>
    <property type="project" value="UniProtKB"/>
</dbReference>
<dbReference type="GO" id="GO:0003729">
    <property type="term" value="F:mRNA binding"/>
    <property type="evidence" value="ECO:0000314"/>
    <property type="project" value="MGI"/>
</dbReference>
<dbReference type="GO" id="GO:0035613">
    <property type="term" value="F:RNA stem-loop binding"/>
    <property type="evidence" value="ECO:0000250"/>
    <property type="project" value="UniProtKB"/>
</dbReference>
<dbReference type="GO" id="GO:0061630">
    <property type="term" value="F:ubiquitin protein ligase activity"/>
    <property type="evidence" value="ECO:0000250"/>
    <property type="project" value="UniProtKB"/>
</dbReference>
<dbReference type="GO" id="GO:0008270">
    <property type="term" value="F:zinc ion binding"/>
    <property type="evidence" value="ECO:0007669"/>
    <property type="project" value="UniProtKB-KW"/>
</dbReference>
<dbReference type="GO" id="GO:0001782">
    <property type="term" value="P:B cell homeostasis"/>
    <property type="evidence" value="ECO:0000316"/>
    <property type="project" value="MGI"/>
</dbReference>
<dbReference type="GO" id="GO:0060173">
    <property type="term" value="P:limb development"/>
    <property type="evidence" value="ECO:0000315"/>
    <property type="project" value="MGI"/>
</dbReference>
<dbReference type="GO" id="GO:0048286">
    <property type="term" value="P:lung alveolus development"/>
    <property type="evidence" value="ECO:0000315"/>
    <property type="project" value="MGI"/>
</dbReference>
<dbReference type="GO" id="GO:0048535">
    <property type="term" value="P:lymph node development"/>
    <property type="evidence" value="ECO:0000316"/>
    <property type="project" value="MGI"/>
</dbReference>
<dbReference type="GO" id="GO:0035264">
    <property type="term" value="P:multicellular organism growth"/>
    <property type="evidence" value="ECO:0000315"/>
    <property type="project" value="MGI"/>
</dbReference>
<dbReference type="GO" id="GO:2000320">
    <property type="term" value="P:negative regulation of T-helper 17 cell differentiation"/>
    <property type="evidence" value="ECO:0000315"/>
    <property type="project" value="UniProtKB"/>
</dbReference>
<dbReference type="GO" id="GO:1901224">
    <property type="term" value="P:positive regulation of non-canonical NF-kappaB signal transduction"/>
    <property type="evidence" value="ECO:0000314"/>
    <property type="project" value="MGI"/>
</dbReference>
<dbReference type="GO" id="GO:0009791">
    <property type="term" value="P:post-embryonic development"/>
    <property type="evidence" value="ECO:0000315"/>
    <property type="project" value="MGI"/>
</dbReference>
<dbReference type="GO" id="GO:0010608">
    <property type="term" value="P:post-transcriptional regulation of gene expression"/>
    <property type="evidence" value="ECO:0000314"/>
    <property type="project" value="MGI"/>
</dbReference>
<dbReference type="GO" id="GO:0000209">
    <property type="term" value="P:protein polyubiquitination"/>
    <property type="evidence" value="ECO:0000250"/>
    <property type="project" value="UniProtKB"/>
</dbReference>
<dbReference type="GO" id="GO:0010468">
    <property type="term" value="P:regulation of gene expression"/>
    <property type="evidence" value="ECO:0000314"/>
    <property type="project" value="MGI"/>
</dbReference>
<dbReference type="GO" id="GO:2000628">
    <property type="term" value="P:regulation of miRNA metabolic process"/>
    <property type="evidence" value="ECO:0000315"/>
    <property type="project" value="UniProtKB"/>
</dbReference>
<dbReference type="GO" id="GO:0048536">
    <property type="term" value="P:spleen development"/>
    <property type="evidence" value="ECO:0000316"/>
    <property type="project" value="MGI"/>
</dbReference>
<dbReference type="GO" id="GO:0043029">
    <property type="term" value="P:T cell homeostasis"/>
    <property type="evidence" value="ECO:0000316"/>
    <property type="project" value="MGI"/>
</dbReference>
<dbReference type="GO" id="GO:0042098">
    <property type="term" value="P:T cell proliferation"/>
    <property type="evidence" value="ECO:0000316"/>
    <property type="project" value="MGI"/>
</dbReference>
<dbReference type="GO" id="GO:0050852">
    <property type="term" value="P:T cell receptor signaling pathway"/>
    <property type="evidence" value="ECO:0000315"/>
    <property type="project" value="UniProtKB"/>
</dbReference>
<dbReference type="GO" id="GO:0061470">
    <property type="term" value="P:T follicular helper cell differentiation"/>
    <property type="evidence" value="ECO:0000316"/>
    <property type="project" value="MGI"/>
</dbReference>
<dbReference type="CDD" id="cd16782">
    <property type="entry name" value="mRING-HC-C3HC3D_Roquin2"/>
    <property type="match status" value="1"/>
</dbReference>
<dbReference type="FunFam" id="1.20.120.1790:FF:000001">
    <property type="entry name" value="roquin-1 isoform X1"/>
    <property type="match status" value="1"/>
</dbReference>
<dbReference type="FunFam" id="4.10.1000.10:FF:000004">
    <property type="entry name" value="roquin-1 isoform X2"/>
    <property type="match status" value="1"/>
</dbReference>
<dbReference type="FunFam" id="3.30.40.10:FF:000047">
    <property type="entry name" value="Roquin-2 isoform 1"/>
    <property type="match status" value="1"/>
</dbReference>
<dbReference type="Gene3D" id="1.20.120.1790">
    <property type="match status" value="1"/>
</dbReference>
<dbReference type="Gene3D" id="4.10.1000.10">
    <property type="entry name" value="Zinc finger, CCCH-type"/>
    <property type="match status" value="1"/>
</dbReference>
<dbReference type="Gene3D" id="3.30.40.10">
    <property type="entry name" value="Zinc/RING finger domain, C3HC4 (zinc finger)"/>
    <property type="match status" value="1"/>
</dbReference>
<dbReference type="InterPro" id="IPR041523">
    <property type="entry name" value="ROQ_II"/>
</dbReference>
<dbReference type="InterPro" id="IPR048575">
    <property type="entry name" value="Roquin_1_2-like_ROQ"/>
</dbReference>
<dbReference type="InterPro" id="IPR052249">
    <property type="entry name" value="Roquin_domain"/>
</dbReference>
<dbReference type="InterPro" id="IPR000571">
    <property type="entry name" value="Znf_CCCH"/>
</dbReference>
<dbReference type="InterPro" id="IPR036855">
    <property type="entry name" value="Znf_CCCH_sf"/>
</dbReference>
<dbReference type="InterPro" id="IPR001841">
    <property type="entry name" value="Znf_RING"/>
</dbReference>
<dbReference type="InterPro" id="IPR013083">
    <property type="entry name" value="Znf_RING/FYVE/PHD"/>
</dbReference>
<dbReference type="InterPro" id="IPR017907">
    <property type="entry name" value="Znf_RING_CS"/>
</dbReference>
<dbReference type="PANTHER" id="PTHR13139">
    <property type="entry name" value="RING FINGER AND CCCH-TYPE ZINC FINGER DOMAIN-CONTAINING PROTEIN"/>
    <property type="match status" value="1"/>
</dbReference>
<dbReference type="PANTHER" id="PTHR13139:SF2">
    <property type="entry name" value="ROQUIN-2"/>
    <property type="match status" value="1"/>
</dbReference>
<dbReference type="Pfam" id="PF18386">
    <property type="entry name" value="ROQ_II"/>
    <property type="match status" value="1"/>
</dbReference>
<dbReference type="Pfam" id="PF21206">
    <property type="entry name" value="Roquin_1_2-like_ROQ"/>
    <property type="match status" value="1"/>
</dbReference>
<dbReference type="Pfam" id="PF00642">
    <property type="entry name" value="zf-CCCH"/>
    <property type="match status" value="1"/>
</dbReference>
<dbReference type="Pfam" id="PF14634">
    <property type="entry name" value="zf-RING_5"/>
    <property type="match status" value="1"/>
</dbReference>
<dbReference type="SMART" id="SM00184">
    <property type="entry name" value="RING"/>
    <property type="match status" value="1"/>
</dbReference>
<dbReference type="SMART" id="SM00356">
    <property type="entry name" value="ZnF_C3H1"/>
    <property type="match status" value="1"/>
</dbReference>
<dbReference type="SUPFAM" id="SSF90229">
    <property type="entry name" value="CCCH zinc finger"/>
    <property type="match status" value="1"/>
</dbReference>
<dbReference type="SUPFAM" id="SSF57850">
    <property type="entry name" value="RING/U-box"/>
    <property type="match status" value="1"/>
</dbReference>
<dbReference type="PROSITE" id="PS50103">
    <property type="entry name" value="ZF_C3H1"/>
    <property type="match status" value="1"/>
</dbReference>
<dbReference type="PROSITE" id="PS00518">
    <property type="entry name" value="ZF_RING_1"/>
    <property type="match status" value="1"/>
</dbReference>
<dbReference type="PROSITE" id="PS50089">
    <property type="entry name" value="ZF_RING_2"/>
    <property type="match status" value="1"/>
</dbReference>
<accession>P0C090</accession>
<accession>A2AVP5</accession>
<name>RC3H2_MOUSE</name>
<sequence length="1187" mass="131295">MPVQAAQWTEFLSCPICYNEFDENVHKPISLGCSHTVCKTCLNKLHRKACPFDQTAINTDIDVLPVNFALLQLVGAQVPDHQSIKLSNLGENKHYEVAKKCVEDLALYLKPLSGGKGVASLNQSALSRPMQRKLVTLVNCQLVEEEGRVRAMRAARSLGERTVTELILQHQNPQQLSANLWAAVRARGCQFLGPAMQEEALKLVLLALEDGSALSRKVLVLFVVQRLEPRFPQASKTSIGHVVQLLYRASCFKVTKRDEDSSLMQLKEEFRSYEALRREHDAQIVHIAMEAGLRISPEQWSSLLYGDLAHKSHMQSIIDKLQSPESFAKSVQELTIVLQRTGDPANLNRLRPHLELLANIDPNPDAVSPTWEQLENAMVAVKTVVHGLVDFIQNYSRKGHETPQPQPNSKYKTSMCRDLRQQGGCPRGTNCTFAHSQEELEKYRLRNKKMSATVRTFPLLNKVGVNSTVTTTAGNVISVIGSTETTGKIVASTNGISNTESSVSQLIPRGTDSAVRTLETVKKVGKVGTNAQNAGPSAESVSENKIGSPPKTPVSNAAATSAGPSNFGTELNSLPPKSSPFLTRVPVYPQHSESIQYFQDPRTQIPFEVPQYPQTGYYPPPPTVPAGVTPCVPRFVRSSNVPESSLPPASMPYADHYSTFSPRDRMNSSPYQPPPPQQYGPVPPVPSGMYAPVYDSRRIWRPAMYQRDDIIRSNSLPPMDVMHSSVYQTSLRERYNSLDGYYSVACQPPNDPRTTVPLPREPCGHLKTSCEEQLRRKPDQWTQYHTQKTPVSSTLPVATQSPTPPSPLFSVDFRSDFSESVSGAKFEEDHLSHYSPWSCGTIGSCINAIDSEPKDVIANSNAVLMDLDSGDVKRRVHLFEAQRRTKEEDPIIPFSDGPIISKWGAISRSSRTGYHTTDPVQATASQGSATKPISVSDYVPYVNAVDSRWSSYGNDATSSAHYIERDRFIVTDLSGHRKHSSTGDLLSIELQQAKSNSLLLQREANALAMQQKWNSLDEGRHLTLNLLSKEIELRNGENDYTEDTVDTKPDRDIELELSALDTDEPDGQSEQIEEILDIQLGISSQNDQLLNGTAVENGHPAQQHQKDPGKPKRQSLGEDHVILEEQKPILPVTSCFSQPRPMSISSASCLPITTSVSVGNLILKTHVMSEDKNDFLKPIANGKMVNS</sequence>
<protein>
    <recommendedName>
        <fullName>Roquin-2</fullName>
        <ecNumber evidence="2">2.3.2.27</ecNumber>
    </recommendedName>
    <alternativeName>
        <fullName>Membrane-associated nucleic acid-binding protein</fullName>
    </alternativeName>
    <alternativeName>
        <fullName>RING finger and CCCH-type zinc finger domain-containing protein 2</fullName>
    </alternativeName>
    <alternativeName>
        <fullName evidence="11">RING-type E3 ubiquitin transferase Roquin-2</fullName>
    </alternativeName>
</protein>
<feature type="chain" id="PRO_0000055969" description="Roquin-2">
    <location>
        <begin position="1"/>
        <end position="1187"/>
    </location>
</feature>
<feature type="zinc finger region" description="RING-type; degenerate" evidence="3">
    <location>
        <begin position="14"/>
        <end position="54"/>
    </location>
</feature>
<feature type="zinc finger region" description="C3H1-type" evidence="4">
    <location>
        <begin position="410"/>
        <end position="438"/>
    </location>
</feature>
<feature type="region of interest" description="HEPN-N" evidence="2">
    <location>
        <begin position="91"/>
        <end position="170"/>
    </location>
</feature>
<feature type="region of interest" description="ROQ" evidence="2">
    <location>
        <begin position="171"/>
        <end position="325"/>
    </location>
</feature>
<feature type="region of interest" description="HEPN-C" evidence="2">
    <location>
        <begin position="326"/>
        <end position="396"/>
    </location>
</feature>
<feature type="region of interest" description="Disordered" evidence="5">
    <location>
        <begin position="527"/>
        <end position="571"/>
    </location>
</feature>
<feature type="region of interest" description="Disordered" evidence="5">
    <location>
        <begin position="640"/>
        <end position="677"/>
    </location>
</feature>
<feature type="compositionally biased region" description="Polar residues" evidence="5">
    <location>
        <begin position="529"/>
        <end position="545"/>
    </location>
</feature>
<feature type="compositionally biased region" description="Polar residues" evidence="5">
    <location>
        <begin position="553"/>
        <end position="571"/>
    </location>
</feature>
<feature type="binding site" evidence="1">
    <location>
        <position position="14"/>
    </location>
    <ligand>
        <name>Zn(2+)</name>
        <dbReference type="ChEBI" id="CHEBI:29105"/>
        <label>1</label>
    </ligand>
</feature>
<feature type="binding site" evidence="1">
    <location>
        <position position="17"/>
    </location>
    <ligand>
        <name>Zn(2+)</name>
        <dbReference type="ChEBI" id="CHEBI:29105"/>
        <label>1</label>
    </ligand>
</feature>
<feature type="binding site" evidence="1">
    <location>
        <position position="33"/>
    </location>
    <ligand>
        <name>Zn(2+)</name>
        <dbReference type="ChEBI" id="CHEBI:29105"/>
        <label>2</label>
    </ligand>
</feature>
<feature type="binding site" evidence="1">
    <location>
        <position position="35"/>
    </location>
    <ligand>
        <name>Zn(2+)</name>
        <dbReference type="ChEBI" id="CHEBI:29105"/>
        <label>2</label>
    </ligand>
</feature>
<feature type="binding site" evidence="1">
    <location>
        <position position="38"/>
    </location>
    <ligand>
        <name>Zn(2+)</name>
        <dbReference type="ChEBI" id="CHEBI:29105"/>
        <label>1</label>
    </ligand>
</feature>
<feature type="binding site" evidence="1">
    <location>
        <position position="50"/>
    </location>
    <ligand>
        <name>Zn(2+)</name>
        <dbReference type="ChEBI" id="CHEBI:29105"/>
        <label>2</label>
    </ligand>
</feature>
<feature type="binding site" evidence="1">
    <location>
        <position position="53"/>
    </location>
    <ligand>
        <name>Zn(2+)</name>
        <dbReference type="ChEBI" id="CHEBI:29105"/>
        <label>2</label>
    </ligand>
</feature>
<feature type="site" description="Cleavage; by MALT1" evidence="1">
    <location>
        <position position="509"/>
    </location>
</feature>
<feature type="modified residue" description="Phosphoserine" evidence="2">
    <location>
        <position position="548"/>
    </location>
</feature>
<feature type="modified residue" description="Phosphoserine" evidence="2">
    <location>
        <position position="806"/>
    </location>
</feature>
<feature type="modified residue" description="Phosphoserine" evidence="2">
    <location>
        <position position="981"/>
    </location>
</feature>
<feature type="modified residue" description="Phosphoserine" evidence="2">
    <location>
        <position position="1115"/>
    </location>
</feature>
<proteinExistence type="evidence at protein level"/>
<evidence type="ECO:0000250" key="1">
    <source>
        <dbReference type="UniProtKB" id="Q4VGL6"/>
    </source>
</evidence>
<evidence type="ECO:0000250" key="2">
    <source>
        <dbReference type="UniProtKB" id="Q9HBD1"/>
    </source>
</evidence>
<evidence type="ECO:0000255" key="3">
    <source>
        <dbReference type="PROSITE-ProRule" id="PRU00175"/>
    </source>
</evidence>
<evidence type="ECO:0000255" key="4">
    <source>
        <dbReference type="PROSITE-ProRule" id="PRU00723"/>
    </source>
</evidence>
<evidence type="ECO:0000256" key="5">
    <source>
        <dbReference type="SAM" id="MobiDB-lite"/>
    </source>
</evidence>
<evidence type="ECO:0000269" key="6">
    <source>
    </source>
</evidence>
<evidence type="ECO:0000269" key="7">
    <source>
    </source>
</evidence>
<evidence type="ECO:0000269" key="8">
    <source>
    </source>
</evidence>
<evidence type="ECO:0000269" key="9">
    <source>
    </source>
</evidence>
<evidence type="ECO:0000269" key="10">
    <source>
    </source>
</evidence>
<evidence type="ECO:0000305" key="11"/>
<organism>
    <name type="scientific">Mus musculus</name>
    <name type="common">Mouse</name>
    <dbReference type="NCBI Taxonomy" id="10090"/>
    <lineage>
        <taxon>Eukaryota</taxon>
        <taxon>Metazoa</taxon>
        <taxon>Chordata</taxon>
        <taxon>Craniata</taxon>
        <taxon>Vertebrata</taxon>
        <taxon>Euteleostomi</taxon>
        <taxon>Mammalia</taxon>
        <taxon>Eutheria</taxon>
        <taxon>Euarchontoglires</taxon>
        <taxon>Glires</taxon>
        <taxon>Rodentia</taxon>
        <taxon>Myomorpha</taxon>
        <taxon>Muroidea</taxon>
        <taxon>Muridae</taxon>
        <taxon>Murinae</taxon>
        <taxon>Mus</taxon>
        <taxon>Mus</taxon>
    </lineage>
</organism>
<gene>
    <name type="primary">Rc3h2</name>
    <name type="synonym">Mnab</name>
</gene>
<keyword id="KW-0963">Cytoplasm</keyword>
<keyword id="KW-0479">Metal-binding</keyword>
<keyword id="KW-0597">Phosphoprotein</keyword>
<keyword id="KW-1185">Reference proteome</keyword>
<keyword id="KW-0678">Repressor</keyword>
<keyword id="KW-0694">RNA-binding</keyword>
<keyword id="KW-0808">Transferase</keyword>
<keyword id="KW-0833">Ubl conjugation pathway</keyword>
<keyword id="KW-0862">Zinc</keyword>
<keyword id="KW-0863">Zinc-finger</keyword>